<feature type="chain" id="PRO_0000219144" description="Beta-1,3-galactosyltransferase 1">
    <location>
        <begin position="1"/>
        <end position="326"/>
    </location>
</feature>
<feature type="topological domain" description="Cytoplasmic" evidence="3">
    <location>
        <begin position="1"/>
        <end position="6"/>
    </location>
</feature>
<feature type="transmembrane region" description="Helical; Signal-anchor for type II membrane protein" evidence="3">
    <location>
        <begin position="7"/>
        <end position="26"/>
    </location>
</feature>
<feature type="topological domain" description="Lumenal" evidence="3">
    <location>
        <begin position="27"/>
        <end position="326"/>
    </location>
</feature>
<feature type="glycosylation site" description="N-linked (GlcNAc...) asparagine" evidence="3">
    <location>
        <position position="47"/>
    </location>
</feature>
<feature type="glycosylation site" description="N-linked (GlcNAc...) asparagine" evidence="3">
    <location>
        <position position="151"/>
    </location>
</feature>
<comment type="function">
    <text evidence="2">Beta-1,3-galactosyltransferase that transfers galactose from UDP-galactose to substrates with a terminal beta-N-acetylglucosamine (beta-GlcNAc) residue. Involved in the biosynthesis of the carbohydrate moieties of glycolipids and glycoproteins.</text>
</comment>
<comment type="catalytic activity">
    <reaction evidence="2">
        <text>an N-acetyl-beta-D-glucosaminyl derivative + UDP-alpha-D-galactose = a beta-D-galactosyl-(1-&gt;3)-N-acetyl-beta-D-glucosaminyl derivative + UDP + H(+)</text>
        <dbReference type="Rhea" id="RHEA:53432"/>
        <dbReference type="ChEBI" id="CHEBI:15378"/>
        <dbReference type="ChEBI" id="CHEBI:58223"/>
        <dbReference type="ChEBI" id="CHEBI:61631"/>
        <dbReference type="ChEBI" id="CHEBI:66914"/>
        <dbReference type="ChEBI" id="CHEBI:133506"/>
        <dbReference type="EC" id="2.4.1.86"/>
    </reaction>
    <physiologicalReaction direction="left-to-right" evidence="2">
        <dbReference type="Rhea" id="RHEA:53433"/>
    </physiologicalReaction>
</comment>
<comment type="catalytic activity">
    <reaction evidence="2">
        <text>a beta-D-GlcNAc-(1-&gt;3)-beta-D-Gal-(1-&gt;4)-beta-D-Glc-(1&lt;-&gt;1)-Cer(d18:1(4E)) + UDP-alpha-D-galactose = a beta-D-Gal-(1-&gt;3)-beta-D-GlcNAc-(1-&gt;3)-beta-D-Gal-(1-&gt;4)-beta-D-Glc-(1&lt;-&gt;1')-Cer(d18:1(4E)) + UDP + H(+)</text>
        <dbReference type="Rhea" id="RHEA:16045"/>
        <dbReference type="ChEBI" id="CHEBI:15378"/>
        <dbReference type="ChEBI" id="CHEBI:17103"/>
        <dbReference type="ChEBI" id="CHEBI:17292"/>
        <dbReference type="ChEBI" id="CHEBI:58223"/>
        <dbReference type="ChEBI" id="CHEBI:66914"/>
        <dbReference type="EC" id="2.4.1.86"/>
    </reaction>
    <physiologicalReaction direction="left-to-right" evidence="2">
        <dbReference type="Rhea" id="RHEA:16046"/>
    </physiologicalReaction>
</comment>
<comment type="cofactor">
    <cofactor evidence="1">
        <name>Mn(2+)</name>
        <dbReference type="ChEBI" id="CHEBI:29035"/>
    </cofactor>
</comment>
<comment type="pathway">
    <text>Protein modification; protein glycosylation.</text>
</comment>
<comment type="subcellular location">
    <subcellularLocation>
        <location evidence="4">Golgi apparatus membrane</location>
        <topology evidence="4">Single-pass type II membrane protein</topology>
    </subcellularLocation>
</comment>
<comment type="similarity">
    <text evidence="4">Belongs to the glycosyltransferase 31 family.</text>
</comment>
<organism>
    <name type="scientific">Gorilla gorilla gorilla</name>
    <name type="common">Western lowland gorilla</name>
    <dbReference type="NCBI Taxonomy" id="9595"/>
    <lineage>
        <taxon>Eukaryota</taxon>
        <taxon>Metazoa</taxon>
        <taxon>Chordata</taxon>
        <taxon>Craniata</taxon>
        <taxon>Vertebrata</taxon>
        <taxon>Euteleostomi</taxon>
        <taxon>Mammalia</taxon>
        <taxon>Eutheria</taxon>
        <taxon>Euarchontoglires</taxon>
        <taxon>Primates</taxon>
        <taxon>Haplorrhini</taxon>
        <taxon>Catarrhini</taxon>
        <taxon>Hominidae</taxon>
        <taxon>Gorilla</taxon>
    </lineage>
</organism>
<accession>Q7JK24</accession>
<reference key="1">
    <citation type="journal article" date="2004" name="Mol. Biol. Evol.">
        <title>Human-specific amino acid changes found in 103 protein-coding genes.</title>
        <authorList>
            <person name="Kitano T."/>
            <person name="Liu Y.-H."/>
            <person name="Ueda S."/>
            <person name="Saitou N."/>
        </authorList>
    </citation>
    <scope>NUCLEOTIDE SEQUENCE [GENOMIC DNA]</scope>
</reference>
<sequence length="326" mass="37993">MASKVSCLYVLTVVCWASALWYLSITRPTSSYTGSKPFSHLTVARKNFTFGNIRTRPINPHSFEFLINEPNKCEKNIPFLVILISTTHKEFDARQAIRETWGDENNFKGIKIATLFLLGKNADPVLNQMVEQESQIFHDIIVEDFIDSYHNLTLKTLMGMRWVATFCSKAKYVMKTDSDIFVNMDNLIYKLLKPSTKPRRRYFTGYVINGGPIRDVRSKWYMPRDLYPDSNYPPFCSGTGYIFSADVAELIYKTSLHTRLLHLEDVYVGLCLRKLGIHPFQNSGFNHWKMAYSLCRYRRVITVHQISPEEMHRIWNDMSSKKHLRC</sequence>
<protein>
    <recommendedName>
        <fullName>Beta-1,3-galactosyltransferase 1</fullName>
        <shortName>Beta-1,3-GalTase 1</shortName>
        <shortName>Beta3Gal-T1</shortName>
        <shortName>Beta3GalT1</shortName>
        <ecNumber evidence="2">2.4.1.86</ecNumber>
    </recommendedName>
    <alternativeName>
        <fullName>UDP-galactose:beta-N-acetyl-glucosamine-beta-1,3-galactosyltransferase 1</fullName>
    </alternativeName>
</protein>
<gene>
    <name type="primary">B3GALT1</name>
</gene>
<proteinExistence type="inferred from homology"/>
<dbReference type="EC" id="2.4.1.86" evidence="2"/>
<dbReference type="EMBL" id="AB041410">
    <property type="protein sequence ID" value="BAA94495.1"/>
    <property type="molecule type" value="Genomic_DNA"/>
</dbReference>
<dbReference type="RefSeq" id="XP_004032783.1">
    <property type="nucleotide sequence ID" value="XM_004032735.2"/>
</dbReference>
<dbReference type="RefSeq" id="XP_055236233.1">
    <property type="nucleotide sequence ID" value="XM_055380258.2"/>
</dbReference>
<dbReference type="RefSeq" id="XP_055236234.1">
    <property type="nucleotide sequence ID" value="XM_055380259.2"/>
</dbReference>
<dbReference type="RefSeq" id="XP_055236235.1">
    <property type="nucleotide sequence ID" value="XM_055380260.2"/>
</dbReference>
<dbReference type="RefSeq" id="XP_055236236.1">
    <property type="nucleotide sequence ID" value="XM_055380261.2"/>
</dbReference>
<dbReference type="RefSeq" id="XP_063551033.1">
    <property type="nucleotide sequence ID" value="XM_063694963.1"/>
</dbReference>
<dbReference type="SMR" id="Q7JK24"/>
<dbReference type="FunCoup" id="Q7JK24">
    <property type="interactions" value="28"/>
</dbReference>
<dbReference type="STRING" id="9593.ENSGGOP00000007931"/>
<dbReference type="GlyCosmos" id="Q7JK24">
    <property type="glycosylation" value="2 sites, No reported glycans"/>
</dbReference>
<dbReference type="Ensembl" id="ENSGGOT00000008148.3">
    <property type="protein sequence ID" value="ENSGGOP00000007931.2"/>
    <property type="gene ID" value="ENSGGOG00000008115.3"/>
</dbReference>
<dbReference type="GeneID" id="109025903"/>
<dbReference type="eggNOG" id="KOG2287">
    <property type="taxonomic scope" value="Eukaryota"/>
</dbReference>
<dbReference type="GeneTree" id="ENSGT00940000156219"/>
<dbReference type="HOGENOM" id="CLU_036849_2_4_1"/>
<dbReference type="InParanoid" id="Q7JK24"/>
<dbReference type="OMA" id="MPRDVYP"/>
<dbReference type="UniPathway" id="UPA00378"/>
<dbReference type="Proteomes" id="UP000001519">
    <property type="component" value="Chromosome 2B"/>
</dbReference>
<dbReference type="Bgee" id="ENSGGOG00000008115">
    <property type="expression patterns" value="Expressed in prefrontal cortex and 2 other cell types or tissues"/>
</dbReference>
<dbReference type="GO" id="GO:0000139">
    <property type="term" value="C:Golgi membrane"/>
    <property type="evidence" value="ECO:0000318"/>
    <property type="project" value="GO_Central"/>
</dbReference>
<dbReference type="GO" id="GO:0008499">
    <property type="term" value="F:N-acetyl-beta-D-glucosaminide beta-(1,3)-galactosyltransferase activity"/>
    <property type="evidence" value="ECO:0000318"/>
    <property type="project" value="GO_Central"/>
</dbReference>
<dbReference type="GO" id="GO:0006682">
    <property type="term" value="P:galactosylceramide biosynthetic process"/>
    <property type="evidence" value="ECO:0007669"/>
    <property type="project" value="Ensembl"/>
</dbReference>
<dbReference type="GO" id="GO:0030259">
    <property type="term" value="P:lipid glycosylation"/>
    <property type="evidence" value="ECO:0000318"/>
    <property type="project" value="GO_Central"/>
</dbReference>
<dbReference type="GO" id="GO:0009312">
    <property type="term" value="P:oligosaccharide biosynthetic process"/>
    <property type="evidence" value="ECO:0007669"/>
    <property type="project" value="Ensembl"/>
</dbReference>
<dbReference type="GO" id="GO:0006493">
    <property type="term" value="P:protein O-linked glycosylation"/>
    <property type="evidence" value="ECO:0000318"/>
    <property type="project" value="GO_Central"/>
</dbReference>
<dbReference type="FunFam" id="3.90.550.50:FF:000001">
    <property type="entry name" value="Hexosyltransferase"/>
    <property type="match status" value="1"/>
</dbReference>
<dbReference type="Gene3D" id="3.90.550.50">
    <property type="match status" value="1"/>
</dbReference>
<dbReference type="InterPro" id="IPR002659">
    <property type="entry name" value="Glyco_trans_31"/>
</dbReference>
<dbReference type="InterPro" id="IPR029044">
    <property type="entry name" value="Nucleotide-diphossugar_trans"/>
</dbReference>
<dbReference type="PANTHER" id="PTHR11214:SF20">
    <property type="entry name" value="BETA-1,3-GALACTOSYLTRANSFERASE 1"/>
    <property type="match status" value="1"/>
</dbReference>
<dbReference type="PANTHER" id="PTHR11214">
    <property type="entry name" value="BETA-1,3-N-ACETYLGLUCOSAMINYLTRANSFERASE"/>
    <property type="match status" value="1"/>
</dbReference>
<dbReference type="Pfam" id="PF01762">
    <property type="entry name" value="Galactosyl_T"/>
    <property type="match status" value="1"/>
</dbReference>
<dbReference type="SUPFAM" id="SSF53448">
    <property type="entry name" value="Nucleotide-diphospho-sugar transferases"/>
    <property type="match status" value="1"/>
</dbReference>
<evidence type="ECO:0000250" key="1"/>
<evidence type="ECO:0000250" key="2">
    <source>
        <dbReference type="UniProtKB" id="Q9Y5Z6"/>
    </source>
</evidence>
<evidence type="ECO:0000255" key="3"/>
<evidence type="ECO:0000305" key="4"/>
<name>B3GT1_GORGO</name>
<keyword id="KW-0325">Glycoprotein</keyword>
<keyword id="KW-0328">Glycosyltransferase</keyword>
<keyword id="KW-0333">Golgi apparatus</keyword>
<keyword id="KW-0443">Lipid metabolism</keyword>
<keyword id="KW-0464">Manganese</keyword>
<keyword id="KW-0472">Membrane</keyword>
<keyword id="KW-1185">Reference proteome</keyword>
<keyword id="KW-0735">Signal-anchor</keyword>
<keyword id="KW-0808">Transferase</keyword>
<keyword id="KW-0812">Transmembrane</keyword>
<keyword id="KW-1133">Transmembrane helix</keyword>